<sequence length="132" mass="14683">MFRERIIVQDSLVADESGSAFRIRLPWYRALPLSTIEELSVTVDGTAFDPARLRIAVNDGEWALAEAQLRTDDVWFVLDDATVRLPGLVLDAGAHEVQATLSMRIPYLPVAGKPLSMAETDQKRMDVKELTA</sequence>
<gene>
    <name evidence="2" type="primary">carC</name>
</gene>
<proteinExistence type="evidence at protein level"/>
<keyword id="KW-0119">Carbohydrate metabolism</keyword>
<keyword id="KW-0456">Lyase</keyword>
<keyword id="KW-0460">Magnesium</keyword>
<name>CGDB_MICSX</name>
<dbReference type="EC" id="4.1.99.28" evidence="1"/>
<dbReference type="EMBL" id="LC387600">
    <property type="protein sequence ID" value="BBE36492.1"/>
    <property type="molecule type" value="Genomic_DNA"/>
</dbReference>
<dbReference type="SMR" id="P0DXE6"/>
<dbReference type="KEGG" id="ag:BBE36492"/>
<dbReference type="GO" id="GO:0016829">
    <property type="term" value="F:lyase activity"/>
    <property type="evidence" value="ECO:0007669"/>
    <property type="project" value="UniProtKB-KW"/>
</dbReference>
<dbReference type="InterPro" id="IPR045959">
    <property type="entry name" value="CGDB"/>
</dbReference>
<dbReference type="Pfam" id="PF19906">
    <property type="entry name" value="CGDB"/>
    <property type="match status" value="1"/>
</dbReference>
<accession>P0DXE6</accession>
<evidence type="ECO:0000269" key="1">
    <source>
    </source>
</evidence>
<evidence type="ECO:0000303" key="2">
    <source>
    </source>
</evidence>
<evidence type="ECO:0000305" key="3"/>
<feature type="chain" id="PRO_0000461031" description="3'-dehydrocarminate deglycosidase beta subunit">
    <location>
        <begin position="1"/>
        <end position="132"/>
    </location>
</feature>
<comment type="function">
    <text evidence="1">Carbon-carbon bond-cleaving enzyme which participates in a carminate degradation pathway (PubMed:34728636). Cleaves the C-C bond in 3'-dehydrocarminate to form kermesate (PubMed:34728636). Also shows weak activity with other C-glycosides, such as 3''-dehydropuerarin (3''-oxo-puerarin), 3''-dehydroisoorientin (3''-oxo-homoorientin) and 3'-dehydromangiferin (3'-oxo-mangiferin) (PubMed:34728636).</text>
</comment>
<comment type="catalytic activity">
    <reaction evidence="1">
        <text>3'-dehydrocarminate + H(+) = kermesate + 1,5-anhydro-D-erythro-hex-1-en-3-ulose</text>
        <dbReference type="Rhea" id="RHEA:76567"/>
        <dbReference type="ChEBI" id="CHEBI:15378"/>
        <dbReference type="ChEBI" id="CHEBI:149530"/>
        <dbReference type="ChEBI" id="CHEBI:192513"/>
        <dbReference type="ChEBI" id="CHEBI:195275"/>
        <dbReference type="EC" id="4.1.99.28"/>
    </reaction>
</comment>
<comment type="cofactor">
    <cofactor evidence="1">
        <name>Mg(2+)</name>
        <dbReference type="ChEBI" id="CHEBI:18420"/>
    </cofactor>
</comment>
<comment type="activity regulation">
    <text evidence="1">Activity is strongly reduced in the presence of chelating agents.</text>
</comment>
<comment type="biophysicochemical properties">
    <kinetics>
        <KM evidence="1">0.39 mM for 3'-dehydrocarminate</KM>
        <KM evidence="1">7.5 mM for 3''-dehydropuerarin</KM>
        <KM evidence="1">11 mM for 3''-dehydroisoorientin</KM>
        <KM evidence="1">5.4 mM for 3'-dehydromangiferin</KM>
        <text evidence="1">kcat is 23 min(-1) with 3'-dehydrocarminate as substrate. kcat is 0.12 min(-1) with 3''-dehydropuerarin as substrate. kcat is 0.024 min(-1) with 3''-dehydroisoorientin as substrate. kcat is 0.16 min(-1) with 3'-dehydromangiferin as substrate.</text>
    </kinetics>
    <phDependence>
        <text evidence="1">Optimum pH is 7.5.</text>
    </phDependence>
    <temperatureDependence>
        <text evidence="1">Optimum temperature is around 40 degrees Celsius.</text>
    </temperatureDependence>
</comment>
<comment type="subunit">
    <text evidence="1">Heterodimer composed of an alpha subunit (CarB) and a beta subunit (CarC).</text>
</comment>
<comment type="similarity">
    <text evidence="3">Belongs to the C-glycoside deglycosidase beta subunit family.</text>
</comment>
<reference key="1">
    <citation type="journal article" date="2021" name="Nat. Commun.">
        <title>C-Glycoside metabolism in the gut and in nature: Identification, characterization, structural analyses and distribution of C-C bond-cleaving enzymes.</title>
        <authorList>
            <person name="Mori T."/>
            <person name="Kumano T."/>
            <person name="He H."/>
            <person name="Watanabe S."/>
            <person name="Senda M."/>
            <person name="Moriya T."/>
            <person name="Adachi N."/>
            <person name="Hori S."/>
            <person name="Terashita Y."/>
            <person name="Kawasaki M."/>
            <person name="Hashimoto Y."/>
            <person name="Awakawa T."/>
            <person name="Senda T."/>
            <person name="Abe I."/>
            <person name="Kobayashi M."/>
        </authorList>
    </citation>
    <scope>NUCLEOTIDE SEQUENCE [GENOMIC DNA]</scope>
    <scope>FUNCTION</scope>
    <scope>CATALYTIC ACTIVITY</scope>
    <scope>COFACTOR</scope>
    <scope>ACTIVITY REGULATION</scope>
    <scope>BIOPHYSICOCHEMICAL PROPERTIES</scope>
    <scope>SUBUNIT</scope>
    <source>
        <strain>5-2b</strain>
    </source>
</reference>
<organism>
    <name type="scientific">Microbacterium sp</name>
    <dbReference type="NCBI Taxonomy" id="51671"/>
    <lineage>
        <taxon>Bacteria</taxon>
        <taxon>Bacillati</taxon>
        <taxon>Actinomycetota</taxon>
        <taxon>Actinomycetes</taxon>
        <taxon>Micrococcales</taxon>
        <taxon>Microbacteriaceae</taxon>
        <taxon>Microbacterium</taxon>
    </lineage>
</organism>
<protein>
    <recommendedName>
        <fullName evidence="3">3'-dehydrocarminate deglycosidase beta subunit</fullName>
        <ecNumber evidence="1">4.1.99.28</ecNumber>
    </recommendedName>
    <alternativeName>
        <fullName evidence="2">C-deglycosylation enzyme beta subunit</fullName>
    </alternativeName>
    <alternativeName>
        <fullName evidence="2">C-glycoside deglycosidase beta subunit</fullName>
        <shortName evidence="2">CGD beta subunit</shortName>
    </alternativeName>
    <alternativeName>
        <fullName evidence="2">MiCGD beta</fullName>
    </alternativeName>
</protein>